<reference key="1">
    <citation type="journal article" date="2001" name="J. Bacteriol.">
        <title>Infrequent genetic exchange and recombination in the mitochondrial genome of Candida albicans.</title>
        <authorList>
            <person name="Anderson J.B."/>
            <person name="Wickens C."/>
            <person name="Khan M."/>
            <person name="Cowen L.E."/>
            <person name="Federspiel N.A."/>
            <person name="Jones T."/>
            <person name="Kohn L.M."/>
        </authorList>
    </citation>
    <scope>NUCLEOTIDE SEQUENCE [LARGE SCALE GENOMIC DNA]</scope>
    <source>
        <strain>SC5314 / ATCC MYA-2876</strain>
    </source>
</reference>
<comment type="function">
    <text evidence="1">Mitochondrial membrane ATP synthase (F(1)F(0) ATP synthase or Complex V) produces ATP from ADP in the presence of a proton gradient across the membrane which is generated by electron transport complexes of the respiratory chain. F-type ATPases consist of two structural domains, F(1) - containing the extramembraneous catalytic core and F(0) - containing the membrane proton channel, linked together by a central stalk and a peripheral stalk. During catalysis, ATP synthesis in the catalytic domain of F(1) is coupled via a rotary mechanism of the central stalk subunits to proton translocation. Part of the complex F(0) domain. A homomeric c-ring of probably 10 subunits is part of the complex rotary element (By similarity).</text>
</comment>
<comment type="subunit">
    <text>F-type ATPases have 2 components, CF(1) - the catalytic core - and CF(0) - the membrane proton channel. CF(1) has five subunits: alpha(3), beta(3), gamma(1), delta(1), epsilon(1). CF(0) has three main subunits: a, b and c.</text>
</comment>
<comment type="subcellular location">
    <subcellularLocation>
        <location evidence="3">Mitochondrion membrane</location>
        <topology evidence="3">Multi-pass membrane protein</topology>
    </subcellularLocation>
</comment>
<comment type="similarity">
    <text evidence="3">Belongs to the ATPase C chain family.</text>
</comment>
<feature type="chain" id="PRO_0000356858" description="ATP synthase subunit 9, mitochondrial">
    <location>
        <begin position="1"/>
        <end position="76"/>
    </location>
</feature>
<feature type="transmembrane region" description="Helical" evidence="2">
    <location>
        <begin position="14"/>
        <end position="34"/>
    </location>
</feature>
<feature type="transmembrane region" description="Helical" evidence="2">
    <location>
        <begin position="52"/>
        <end position="72"/>
    </location>
</feature>
<feature type="site" description="Reversibly protonated during proton transport" evidence="1">
    <location>
        <position position="59"/>
    </location>
</feature>
<geneLocation type="mitochondrion"/>
<protein>
    <recommendedName>
        <fullName>ATP synthase subunit 9, mitochondrial</fullName>
    </recommendedName>
    <alternativeName>
        <fullName>Lipid-binding protein</fullName>
    </alternativeName>
</protein>
<name>ATP9_CANAL</name>
<organism>
    <name type="scientific">Candida albicans (strain SC5314 / ATCC MYA-2876)</name>
    <name type="common">Yeast</name>
    <dbReference type="NCBI Taxonomy" id="237561"/>
    <lineage>
        <taxon>Eukaryota</taxon>
        <taxon>Fungi</taxon>
        <taxon>Dikarya</taxon>
        <taxon>Ascomycota</taxon>
        <taxon>Saccharomycotina</taxon>
        <taxon>Pichiomycetes</taxon>
        <taxon>Debaryomycetaceae</taxon>
        <taxon>Candida/Lodderomyces clade</taxon>
        <taxon>Candida</taxon>
    </lineage>
</organism>
<dbReference type="EMBL" id="AF285261">
    <property type="protein sequence ID" value="AAG59591.1"/>
    <property type="molecule type" value="Genomic_DNA"/>
</dbReference>
<dbReference type="RefSeq" id="NP_075034.1">
    <property type="nucleotide sequence ID" value="NC_002653.1"/>
</dbReference>
<dbReference type="SMR" id="Q9B8D5"/>
<dbReference type="FunCoup" id="Q9B8D5">
    <property type="interactions" value="869"/>
</dbReference>
<dbReference type="STRING" id="237561.Q9B8D5"/>
<dbReference type="EnsemblFungi" id="CM_00140C-T">
    <property type="protein sequence ID" value="CM_00140C-T-p1"/>
    <property type="gene ID" value="CM_00140C"/>
</dbReference>
<dbReference type="GeneID" id="802561"/>
<dbReference type="KEGG" id="cal:CaalfMp05"/>
<dbReference type="CGD" id="CAL0000186811">
    <property type="gene designation" value="ATP9"/>
</dbReference>
<dbReference type="VEuPathDB" id="FungiDB:CM_00140C"/>
<dbReference type="InParanoid" id="Q9B8D5"/>
<dbReference type="Proteomes" id="UP000000559">
    <property type="component" value="Mitochondrion"/>
</dbReference>
<dbReference type="GO" id="GO:0005743">
    <property type="term" value="C:mitochondrial inner membrane"/>
    <property type="evidence" value="ECO:0007669"/>
    <property type="project" value="EnsemblFungi"/>
</dbReference>
<dbReference type="GO" id="GO:0045259">
    <property type="term" value="C:proton-transporting ATP synthase complex"/>
    <property type="evidence" value="ECO:0000250"/>
    <property type="project" value="CGD"/>
</dbReference>
<dbReference type="GO" id="GO:0033177">
    <property type="term" value="C:proton-transporting two-sector ATPase complex, proton-transporting domain"/>
    <property type="evidence" value="ECO:0007669"/>
    <property type="project" value="InterPro"/>
</dbReference>
<dbReference type="GO" id="GO:0016887">
    <property type="term" value="F:ATP hydrolysis activity"/>
    <property type="evidence" value="ECO:0007669"/>
    <property type="project" value="EnsemblFungi"/>
</dbReference>
<dbReference type="GO" id="GO:0042802">
    <property type="term" value="F:identical protein binding"/>
    <property type="evidence" value="ECO:0007669"/>
    <property type="project" value="EnsemblFungi"/>
</dbReference>
<dbReference type="GO" id="GO:0008289">
    <property type="term" value="F:lipid binding"/>
    <property type="evidence" value="ECO:0007669"/>
    <property type="project" value="UniProtKB-KW"/>
</dbReference>
<dbReference type="GO" id="GO:0046933">
    <property type="term" value="F:proton-transporting ATP synthase activity, rotational mechanism"/>
    <property type="evidence" value="ECO:0000250"/>
    <property type="project" value="CGD"/>
</dbReference>
<dbReference type="GO" id="GO:0015986">
    <property type="term" value="P:proton motive force-driven ATP synthesis"/>
    <property type="evidence" value="ECO:0000250"/>
    <property type="project" value="CGD"/>
</dbReference>
<dbReference type="CDD" id="cd18182">
    <property type="entry name" value="ATP-synt_Fo_c_ATP5G3"/>
    <property type="match status" value="1"/>
</dbReference>
<dbReference type="FunFam" id="1.20.20.10:FF:000021">
    <property type="entry name" value="ATP synthase subunit 9, mitochondrial"/>
    <property type="match status" value="1"/>
</dbReference>
<dbReference type="Gene3D" id="1.20.20.10">
    <property type="entry name" value="F1F0 ATP synthase subunit C"/>
    <property type="match status" value="1"/>
</dbReference>
<dbReference type="HAMAP" id="MF_01396">
    <property type="entry name" value="ATP_synth_c_bact"/>
    <property type="match status" value="1"/>
</dbReference>
<dbReference type="InterPro" id="IPR000454">
    <property type="entry name" value="ATP_synth_F0_csu"/>
</dbReference>
<dbReference type="InterPro" id="IPR020537">
    <property type="entry name" value="ATP_synth_F0_csu_DDCD_BS"/>
</dbReference>
<dbReference type="InterPro" id="IPR038662">
    <property type="entry name" value="ATP_synth_F0_csu_sf"/>
</dbReference>
<dbReference type="InterPro" id="IPR002379">
    <property type="entry name" value="ATPase_proteolipid_c-like_dom"/>
</dbReference>
<dbReference type="InterPro" id="IPR035921">
    <property type="entry name" value="F/V-ATP_Csub_sf"/>
</dbReference>
<dbReference type="PANTHER" id="PTHR10031">
    <property type="entry name" value="ATP SYNTHASE LIPID-BINDING PROTEIN, MITOCHONDRIAL"/>
    <property type="match status" value="1"/>
</dbReference>
<dbReference type="PANTHER" id="PTHR10031:SF0">
    <property type="entry name" value="ATPASE PROTEIN 9"/>
    <property type="match status" value="1"/>
</dbReference>
<dbReference type="Pfam" id="PF00137">
    <property type="entry name" value="ATP-synt_C"/>
    <property type="match status" value="1"/>
</dbReference>
<dbReference type="PRINTS" id="PR00124">
    <property type="entry name" value="ATPASEC"/>
</dbReference>
<dbReference type="SUPFAM" id="SSF81333">
    <property type="entry name" value="F1F0 ATP synthase subunit C"/>
    <property type="match status" value="1"/>
</dbReference>
<dbReference type="PROSITE" id="PS00605">
    <property type="entry name" value="ATPASE_C"/>
    <property type="match status" value="1"/>
</dbReference>
<evidence type="ECO:0000250" key="1"/>
<evidence type="ECO:0000255" key="2"/>
<evidence type="ECO:0000305" key="3"/>
<evidence type="ECO:0000312" key="4">
    <source>
        <dbReference type="CGD" id="CAL0000186811"/>
    </source>
</evidence>
<accession>Q9B8D5</accession>
<keyword id="KW-0138">CF(0)</keyword>
<keyword id="KW-0375">Hydrogen ion transport</keyword>
<keyword id="KW-0406">Ion transport</keyword>
<keyword id="KW-0446">Lipid-binding</keyword>
<keyword id="KW-0472">Membrane</keyword>
<keyword id="KW-0496">Mitochondrion</keyword>
<keyword id="KW-1185">Reference proteome</keyword>
<keyword id="KW-0812">Transmembrane</keyword>
<keyword id="KW-1133">Transmembrane helix</keyword>
<keyword id="KW-0813">Transport</keyword>
<sequence>MQLALAAKYIGASIATLGLGGAAIGIALVFVALINGTSRNPSLRSTLFPQAILGFALSEACGLFCLMISFLLLYAV</sequence>
<proteinExistence type="inferred from homology"/>
<gene>
    <name type="primary">ATP9</name>
    <name evidence="4" type="ordered locus">CM_00140C</name>
    <name type="ORF">CaalfMp05</name>
</gene>